<organism>
    <name type="scientific">Rhizobium leguminosarum bv. viciae</name>
    <dbReference type="NCBI Taxonomy" id="387"/>
    <lineage>
        <taxon>Bacteria</taxon>
        <taxon>Pseudomonadati</taxon>
        <taxon>Pseudomonadota</taxon>
        <taxon>Alphaproteobacteria</taxon>
        <taxon>Hyphomicrobiales</taxon>
        <taxon>Rhizobiaceae</taxon>
        <taxon>Rhizobium/Agrobacterium group</taxon>
        <taxon>Rhizobium</taxon>
    </lineage>
</organism>
<reference key="1">
    <citation type="journal article" date="1993" name="Mol. Microbiol.">
        <title>Molecular analysis of a microaerobically induced operon required for hydrogenase synthesis in Rhizobium leguminosarum biovar viciae.</title>
        <authorList>
            <person name="Rey L."/>
            <person name="Murillo J."/>
            <person name="Hernando Y."/>
            <person name="Hidalgo E."/>
            <person name="Cabrera E."/>
            <person name="Imperial J."/>
            <person name="Ruiz-Argueso T."/>
        </authorList>
    </citation>
    <scope>NUCLEOTIDE SEQUENCE [GENOMIC DNA]</scope>
    <source>
        <strain>128c53</strain>
    </source>
</reference>
<reference key="2">
    <citation type="journal article" date="1997" name="Mol. Plant Microbe Interact.">
        <title>Organization of the hup-region and its differential transcription in non-symbiotic and symbiotic cells of Rhizobium leguminosarum bv. viciae B10.</title>
        <authorList>
            <person name="Brito B."/>
            <person name="Palacios J.M."/>
            <person name="Imperial J."/>
            <person name="Ruiz-Argueso T."/>
            <person name="Yang W.C."/>
            <person name="Bisseling T."/>
            <person name="Schmitt H."/>
            <person name="Kerl V."/>
            <person name="Bauer T."/>
            <person name="Kokotek W."/>
            <person name="Lotz W."/>
        </authorList>
    </citation>
    <scope>NUCLEOTIDE SEQUENCE [GENOMIC DNA]</scope>
    <source>
        <strain>B10</strain>
    </source>
</reference>
<comment type="function">
    <text evidence="1">Involved in the maturation of [NiFe] hydrogenases. Required for nickel insertion into the metal center of the hydrogenase.</text>
</comment>
<comment type="similarity">
    <text evidence="1 2">Belongs to the HypA/HybF family.</text>
</comment>
<keyword id="KW-0479">Metal-binding</keyword>
<keyword id="KW-0533">Nickel</keyword>
<keyword id="KW-0862">Zinc</keyword>
<proteinExistence type="inferred from homology"/>
<dbReference type="EMBL" id="X52974">
    <property type="protein sequence ID" value="CAA37159.1"/>
    <property type="molecule type" value="Genomic_DNA"/>
</dbReference>
<dbReference type="EMBL" id="Z36981">
    <property type="protein sequence ID" value="CAA85441.1"/>
    <property type="molecule type" value="Genomic_DNA"/>
</dbReference>
<dbReference type="PIR" id="S32873">
    <property type="entry name" value="S32873"/>
</dbReference>
<dbReference type="RefSeq" id="WP_026242366.1">
    <property type="nucleotide sequence ID" value="NZ_WIEG01000075.1"/>
</dbReference>
<dbReference type="SMR" id="P28154"/>
<dbReference type="GeneID" id="84674519"/>
<dbReference type="GO" id="GO:0016151">
    <property type="term" value="F:nickel cation binding"/>
    <property type="evidence" value="ECO:0007669"/>
    <property type="project" value="UniProtKB-UniRule"/>
</dbReference>
<dbReference type="GO" id="GO:0008270">
    <property type="term" value="F:zinc ion binding"/>
    <property type="evidence" value="ECO:0007669"/>
    <property type="project" value="UniProtKB-UniRule"/>
</dbReference>
<dbReference type="GO" id="GO:0051604">
    <property type="term" value="P:protein maturation"/>
    <property type="evidence" value="ECO:0007669"/>
    <property type="project" value="InterPro"/>
</dbReference>
<dbReference type="GO" id="GO:0036211">
    <property type="term" value="P:protein modification process"/>
    <property type="evidence" value="ECO:0007669"/>
    <property type="project" value="UniProtKB-UniRule"/>
</dbReference>
<dbReference type="Gene3D" id="3.30.2320.80">
    <property type="match status" value="1"/>
</dbReference>
<dbReference type="HAMAP" id="MF_00213">
    <property type="entry name" value="HypA_HybF"/>
    <property type="match status" value="1"/>
</dbReference>
<dbReference type="InterPro" id="IPR020538">
    <property type="entry name" value="Hydgase_Ni_incorp_HypA/HybF_CS"/>
</dbReference>
<dbReference type="InterPro" id="IPR000688">
    <property type="entry name" value="HypA/HybF"/>
</dbReference>
<dbReference type="NCBIfam" id="TIGR00100">
    <property type="entry name" value="hypA"/>
    <property type="match status" value="1"/>
</dbReference>
<dbReference type="PANTHER" id="PTHR34535">
    <property type="entry name" value="HYDROGENASE MATURATION FACTOR HYPA"/>
    <property type="match status" value="1"/>
</dbReference>
<dbReference type="PANTHER" id="PTHR34535:SF3">
    <property type="entry name" value="HYDROGENASE MATURATION FACTOR HYPA"/>
    <property type="match status" value="1"/>
</dbReference>
<dbReference type="Pfam" id="PF01155">
    <property type="entry name" value="HypA"/>
    <property type="match status" value="1"/>
</dbReference>
<dbReference type="PIRSF" id="PIRSF004761">
    <property type="entry name" value="Hydrgn_mat_HypA"/>
    <property type="match status" value="1"/>
</dbReference>
<dbReference type="PROSITE" id="PS01249">
    <property type="entry name" value="HYPA"/>
    <property type="match status" value="1"/>
</dbReference>
<sequence>MHEMSLMESVIEIVCETARQNGATRVKSVRLDVGVLSHVNPDALIFCYEAVRHGTVADSATLEINRIAGEGWCLDCGKTVALEERFGACPDCGRHRVQMTAGDELKIRDMEVI</sequence>
<evidence type="ECO:0000255" key="1">
    <source>
        <dbReference type="HAMAP-Rule" id="MF_00213"/>
    </source>
</evidence>
<evidence type="ECO:0000305" key="2"/>
<protein>
    <recommendedName>
        <fullName evidence="1">Hydrogenase maturation factor HypA</fullName>
    </recommendedName>
    <alternativeName>
        <fullName>Protein HupL</fullName>
    </alternativeName>
</protein>
<name>HYPA_RHILV</name>
<feature type="chain" id="PRO_0000129045" description="Hydrogenase maturation factor HypA">
    <location>
        <begin position="1"/>
        <end position="113"/>
    </location>
</feature>
<feature type="binding site" evidence="1">
    <location>
        <position position="2"/>
    </location>
    <ligand>
        <name>Ni(2+)</name>
        <dbReference type="ChEBI" id="CHEBI:49786"/>
    </ligand>
</feature>
<feature type="binding site" evidence="1">
    <location>
        <position position="73"/>
    </location>
    <ligand>
        <name>Zn(2+)</name>
        <dbReference type="ChEBI" id="CHEBI:29105"/>
    </ligand>
</feature>
<feature type="binding site" evidence="1">
    <location>
        <position position="76"/>
    </location>
    <ligand>
        <name>Zn(2+)</name>
        <dbReference type="ChEBI" id="CHEBI:29105"/>
    </ligand>
</feature>
<feature type="binding site" evidence="1">
    <location>
        <position position="89"/>
    </location>
    <ligand>
        <name>Zn(2+)</name>
        <dbReference type="ChEBI" id="CHEBI:29105"/>
    </ligand>
</feature>
<feature type="binding site" evidence="1">
    <location>
        <position position="92"/>
    </location>
    <ligand>
        <name>Zn(2+)</name>
        <dbReference type="ChEBI" id="CHEBI:29105"/>
    </ligand>
</feature>
<accession>P28154</accession>
<gene>
    <name evidence="1" type="primary">hypA</name>
    <name type="synonym">hupL</name>
</gene>